<feature type="chain" id="PRO_0000233374" description="Histone-lysine N-methyltransferase ASHR1">
    <location>
        <begin position="1"/>
        <end position="480"/>
    </location>
</feature>
<feature type="domain" description="SET" evidence="3">
    <location>
        <begin position="11"/>
        <end position="248"/>
    </location>
</feature>
<feature type="zinc finger region" description="MYND-type" evidence="2">
    <location>
        <begin position="56"/>
        <end position="93"/>
    </location>
</feature>
<feature type="binding site" evidence="2">
    <location>
        <position position="56"/>
    </location>
    <ligand>
        <name>Zn(2+)</name>
        <dbReference type="ChEBI" id="CHEBI:29105"/>
        <label>1</label>
    </ligand>
</feature>
<feature type="binding site" evidence="2">
    <location>
        <position position="59"/>
    </location>
    <ligand>
        <name>Zn(2+)</name>
        <dbReference type="ChEBI" id="CHEBI:29105"/>
        <label>1</label>
    </ligand>
</feature>
<feature type="binding site" evidence="2">
    <location>
        <position position="68"/>
    </location>
    <ligand>
        <name>Zn(2+)</name>
        <dbReference type="ChEBI" id="CHEBI:29105"/>
        <label>2</label>
    </ligand>
</feature>
<feature type="binding site" evidence="2">
    <location>
        <position position="71"/>
    </location>
    <ligand>
        <name>Zn(2+)</name>
        <dbReference type="ChEBI" id="CHEBI:29105"/>
        <label>2</label>
    </ligand>
</feature>
<feature type="binding site" evidence="2">
    <location>
        <position position="77"/>
    </location>
    <ligand>
        <name>Zn(2+)</name>
        <dbReference type="ChEBI" id="CHEBI:29105"/>
        <label>1</label>
    </ligand>
</feature>
<feature type="binding site" evidence="2">
    <location>
        <position position="81"/>
    </location>
    <ligand>
        <name>Zn(2+)</name>
        <dbReference type="ChEBI" id="CHEBI:29105"/>
        <label>1</label>
    </ligand>
</feature>
<feature type="binding site" evidence="2">
    <location>
        <position position="89"/>
    </location>
    <ligand>
        <name>Zn(2+)</name>
        <dbReference type="ChEBI" id="CHEBI:29105"/>
        <label>2</label>
    </ligand>
</feature>
<feature type="binding site" evidence="2">
    <location>
        <position position="93"/>
    </location>
    <ligand>
        <name>Zn(2+)</name>
        <dbReference type="ChEBI" id="CHEBI:29105"/>
        <label>2</label>
    </ligand>
</feature>
<comment type="function">
    <text evidence="1">Histone methyltransferase.</text>
</comment>
<comment type="catalytic activity">
    <reaction>
        <text>L-lysyl-[histone] + S-adenosyl-L-methionine = N(6)-methyl-L-lysyl-[histone] + S-adenosyl-L-homocysteine + H(+)</text>
        <dbReference type="Rhea" id="RHEA:10024"/>
        <dbReference type="Rhea" id="RHEA-COMP:9845"/>
        <dbReference type="Rhea" id="RHEA-COMP:9846"/>
        <dbReference type="ChEBI" id="CHEBI:15378"/>
        <dbReference type="ChEBI" id="CHEBI:29969"/>
        <dbReference type="ChEBI" id="CHEBI:57856"/>
        <dbReference type="ChEBI" id="CHEBI:59789"/>
        <dbReference type="ChEBI" id="CHEBI:61929"/>
    </reaction>
</comment>
<comment type="interaction">
    <interactant intactId="EBI-15192553">
        <id>Q7XJS0</id>
    </interactant>
    <interactant intactId="EBI-15192551">
        <id>P42777</id>
        <label>GBF4</label>
    </interactant>
    <organismsDiffer>false</organismsDiffer>
    <experiments>3</experiments>
</comment>
<comment type="subcellular location">
    <subcellularLocation>
        <location evidence="1">Nucleus</location>
    </subcellularLocation>
    <subcellularLocation>
        <location evidence="1">Chromosome</location>
    </subcellularLocation>
</comment>
<comment type="similarity">
    <text evidence="3">Belongs to the class V-like SAM-binding methyltransferase superfamily. Histone-lysine methyltransferase family. SET2 subfamily.</text>
</comment>
<sequence length="480" mass="54828">MADLQRFLQDRCLGVSNLPQKGRSLFTARDFRPGEVILSQKPYICVPNNTSSESRCDGCFKTNNLKKCSACQVVWYCGSSCQKSEWKLHRDECKALTRLEKEKRKFVTPTIRLMVRLYIKRNLQNEKVLPITTTDNYSLVEALVSHMSEIDEKQMLLYAQMANLVNLILQFPSVDLREIAENFSKFSCNAHSICDSELRPQGIGLFPLVSIINHSCSPNAVLVFEEQMAVVRAMDNISKDSEITISYIETAGSTLTRQKSLKEQYLFHCQCARCSNFGKPHDIEESAILEGYRCANEKCTGFLLRDPEEKGFVCQKCLLLRSKEEVKKLASDLKTVSEKAPTSPSAEDKQAAIELYKTIEKLQVKLYHSFSIPLMRTREKLLKMLMDVEIWREALNYCRLIVPVYQRVYPATHPLIGLQFYTQGKLEWLLGETKEAVSSLIKAFDILRISHGISTPFMKELSAKLEEARAEASYKQLALH</sequence>
<evidence type="ECO:0000250" key="1"/>
<evidence type="ECO:0000255" key="2">
    <source>
        <dbReference type="PROSITE-ProRule" id="PRU00134"/>
    </source>
</evidence>
<evidence type="ECO:0000255" key="3">
    <source>
        <dbReference type="PROSITE-ProRule" id="PRU00190"/>
    </source>
</evidence>
<name>ASHR1_ARATH</name>
<reference key="1">
    <citation type="journal article" date="1999" name="Nature">
        <title>Sequence and analysis of chromosome 2 of the plant Arabidopsis thaliana.</title>
        <authorList>
            <person name="Lin X."/>
            <person name="Kaul S."/>
            <person name="Rounsley S.D."/>
            <person name="Shea T.P."/>
            <person name="Benito M.-I."/>
            <person name="Town C.D."/>
            <person name="Fujii C.Y."/>
            <person name="Mason T.M."/>
            <person name="Bowman C.L."/>
            <person name="Barnstead M.E."/>
            <person name="Feldblyum T.V."/>
            <person name="Buell C.R."/>
            <person name="Ketchum K.A."/>
            <person name="Lee J.J."/>
            <person name="Ronning C.M."/>
            <person name="Koo H.L."/>
            <person name="Moffat K.S."/>
            <person name="Cronin L.A."/>
            <person name="Shen M."/>
            <person name="Pai G."/>
            <person name="Van Aken S."/>
            <person name="Umayam L."/>
            <person name="Tallon L.J."/>
            <person name="Gill J.E."/>
            <person name="Adams M.D."/>
            <person name="Carrera A.J."/>
            <person name="Creasy T.H."/>
            <person name="Goodman H.M."/>
            <person name="Somerville C.R."/>
            <person name="Copenhaver G.P."/>
            <person name="Preuss D."/>
            <person name="Nierman W.C."/>
            <person name="White O."/>
            <person name="Eisen J.A."/>
            <person name="Salzberg S.L."/>
            <person name="Fraser C.M."/>
            <person name="Venter J.C."/>
        </authorList>
    </citation>
    <scope>NUCLEOTIDE SEQUENCE [LARGE SCALE GENOMIC DNA]</scope>
    <source>
        <strain>cv. Columbia</strain>
    </source>
</reference>
<reference key="2">
    <citation type="journal article" date="2017" name="Plant J.">
        <title>Araport11: a complete reannotation of the Arabidopsis thaliana reference genome.</title>
        <authorList>
            <person name="Cheng C.Y."/>
            <person name="Krishnakumar V."/>
            <person name="Chan A.P."/>
            <person name="Thibaud-Nissen F."/>
            <person name="Schobel S."/>
            <person name="Town C.D."/>
        </authorList>
    </citation>
    <scope>GENOME REANNOTATION</scope>
    <source>
        <strain>cv. Columbia</strain>
    </source>
</reference>
<reference key="3">
    <citation type="submission" date="2007-04" db="EMBL/GenBank/DDBJ databases">
        <title>Arabidopsis ORF clones.</title>
        <authorList>
            <person name="Bautista-Mercan V.R."/>
            <person name="Kim C.J."/>
            <person name="Chen H."/>
            <person name="Wu S.Y."/>
            <person name="De Los Reyes C."/>
            <person name="Ecker J.R."/>
        </authorList>
    </citation>
    <scope>NUCLEOTIDE SEQUENCE [LARGE SCALE MRNA]</scope>
    <source>
        <strain>cv. Columbia</strain>
    </source>
</reference>
<reference key="4">
    <citation type="journal article" date="2001" name="Nucleic Acids Res.">
        <title>The Arabidopsis thaliana genome contains at least 29 active genes encoding SET domain proteins that can be assigned to four evolutionarily conserved classes.</title>
        <authorList>
            <person name="Baumbusch L.O."/>
            <person name="Thorstensen T."/>
            <person name="Krauss V."/>
            <person name="Fischer A."/>
            <person name="Naumann K."/>
            <person name="Assalkhou R."/>
            <person name="Schulz I."/>
            <person name="Reuter G."/>
            <person name="Aalen R.B."/>
        </authorList>
    </citation>
    <scope>NOMENCLATURE</scope>
</reference>
<gene>
    <name type="primary">ASHR1</name>
    <name type="synonym">SDG37</name>
    <name type="synonym">SET37</name>
    <name type="ordered locus">At2g17900</name>
    <name type="ORF">T13L16.8</name>
</gene>
<organism>
    <name type="scientific">Arabidopsis thaliana</name>
    <name type="common">Mouse-ear cress</name>
    <dbReference type="NCBI Taxonomy" id="3702"/>
    <lineage>
        <taxon>Eukaryota</taxon>
        <taxon>Viridiplantae</taxon>
        <taxon>Streptophyta</taxon>
        <taxon>Embryophyta</taxon>
        <taxon>Tracheophyta</taxon>
        <taxon>Spermatophyta</taxon>
        <taxon>Magnoliopsida</taxon>
        <taxon>eudicotyledons</taxon>
        <taxon>Gunneridae</taxon>
        <taxon>Pentapetalae</taxon>
        <taxon>rosids</taxon>
        <taxon>malvids</taxon>
        <taxon>Brassicales</taxon>
        <taxon>Brassicaceae</taxon>
        <taxon>Camelineae</taxon>
        <taxon>Arabidopsis</taxon>
    </lineage>
</organism>
<dbReference type="EC" id="2.1.1.-"/>
<dbReference type="EMBL" id="CP002685">
    <property type="status" value="NOT_ANNOTATED_CDS"/>
    <property type="molecule type" value="Genomic_DNA"/>
</dbReference>
<dbReference type="EMBL" id="BT030467">
    <property type="protein sequence ID" value="ABP88121.1"/>
    <property type="molecule type" value="mRNA"/>
</dbReference>
<dbReference type="PIR" id="T00834">
    <property type="entry name" value="T00834"/>
</dbReference>
<dbReference type="SMR" id="Q7XJS0"/>
<dbReference type="BioGRID" id="1657">
    <property type="interactions" value="3"/>
</dbReference>
<dbReference type="FunCoup" id="Q7XJS0">
    <property type="interactions" value="1095"/>
</dbReference>
<dbReference type="IntAct" id="Q7XJS0">
    <property type="interactions" value="3"/>
</dbReference>
<dbReference type="STRING" id="3702.Q7XJS0"/>
<dbReference type="GlyGen" id="Q7XJS0">
    <property type="glycosylation" value="1 site"/>
</dbReference>
<dbReference type="PaxDb" id="3702-AT2G17900.1"/>
<dbReference type="Araport" id="AT2G17900"/>
<dbReference type="TAIR" id="AT2G17900">
    <property type="gene designation" value="SDG37"/>
</dbReference>
<dbReference type="eggNOG" id="KOG2084">
    <property type="taxonomic scope" value="Eukaryota"/>
</dbReference>
<dbReference type="HOGENOM" id="CLU_018406_2_0_1"/>
<dbReference type="InParanoid" id="Q7XJS0"/>
<dbReference type="PhylomeDB" id="Q7XJS0"/>
<dbReference type="PRO" id="PR:Q7XJS0"/>
<dbReference type="Proteomes" id="UP000006548">
    <property type="component" value="Chromosome 2"/>
</dbReference>
<dbReference type="ExpressionAtlas" id="Q7XJS0">
    <property type="expression patterns" value="baseline and differential"/>
</dbReference>
<dbReference type="GO" id="GO:0005694">
    <property type="term" value="C:chromosome"/>
    <property type="evidence" value="ECO:0007669"/>
    <property type="project" value="UniProtKB-SubCell"/>
</dbReference>
<dbReference type="GO" id="GO:0005634">
    <property type="term" value="C:nucleus"/>
    <property type="evidence" value="ECO:0000318"/>
    <property type="project" value="GO_Central"/>
</dbReference>
<dbReference type="GO" id="GO:0042054">
    <property type="term" value="F:histone methyltransferase activity"/>
    <property type="evidence" value="ECO:0007669"/>
    <property type="project" value="RHEA"/>
</dbReference>
<dbReference type="GO" id="GO:0008270">
    <property type="term" value="F:zinc ion binding"/>
    <property type="evidence" value="ECO:0007669"/>
    <property type="project" value="UniProtKB-KW"/>
</dbReference>
<dbReference type="GO" id="GO:0032259">
    <property type="term" value="P:methylation"/>
    <property type="evidence" value="ECO:0007669"/>
    <property type="project" value="UniProtKB-KW"/>
</dbReference>
<dbReference type="Gene3D" id="1.10.220.160">
    <property type="match status" value="1"/>
</dbReference>
<dbReference type="Gene3D" id="6.10.140.2220">
    <property type="match status" value="1"/>
</dbReference>
<dbReference type="Gene3D" id="2.170.270.10">
    <property type="entry name" value="SET domain"/>
    <property type="match status" value="1"/>
</dbReference>
<dbReference type="Gene3D" id="1.25.40.10">
    <property type="entry name" value="Tetratricopeptide repeat domain"/>
    <property type="match status" value="1"/>
</dbReference>
<dbReference type="InterPro" id="IPR050869">
    <property type="entry name" value="H3K4_H4K5_MeTrfase"/>
</dbReference>
<dbReference type="InterPro" id="IPR001214">
    <property type="entry name" value="SET_dom"/>
</dbReference>
<dbReference type="InterPro" id="IPR046341">
    <property type="entry name" value="SET_dom_sf"/>
</dbReference>
<dbReference type="InterPro" id="IPR011990">
    <property type="entry name" value="TPR-like_helical_dom_sf"/>
</dbReference>
<dbReference type="InterPro" id="IPR002893">
    <property type="entry name" value="Znf_MYND"/>
</dbReference>
<dbReference type="PANTHER" id="PTHR12197:SF251">
    <property type="entry name" value="EG:BACR7C10.4 PROTEIN"/>
    <property type="match status" value="1"/>
</dbReference>
<dbReference type="PANTHER" id="PTHR12197">
    <property type="entry name" value="HISTONE-LYSINE N-METHYLTRANSFERASE SMYD"/>
    <property type="match status" value="1"/>
</dbReference>
<dbReference type="Pfam" id="PF00856">
    <property type="entry name" value="SET"/>
    <property type="match status" value="1"/>
</dbReference>
<dbReference type="Pfam" id="PF01753">
    <property type="entry name" value="zf-MYND"/>
    <property type="match status" value="1"/>
</dbReference>
<dbReference type="SMART" id="SM00317">
    <property type="entry name" value="SET"/>
    <property type="match status" value="1"/>
</dbReference>
<dbReference type="SUPFAM" id="SSF82199">
    <property type="entry name" value="SET domain"/>
    <property type="match status" value="1"/>
</dbReference>
<dbReference type="PROSITE" id="PS50280">
    <property type="entry name" value="SET"/>
    <property type="match status" value="1"/>
</dbReference>
<dbReference type="PROSITE" id="PS01360">
    <property type="entry name" value="ZF_MYND_1"/>
    <property type="match status" value="1"/>
</dbReference>
<dbReference type="PROSITE" id="PS50865">
    <property type="entry name" value="ZF_MYND_2"/>
    <property type="match status" value="1"/>
</dbReference>
<accession>Q7XJS0</accession>
<accession>A4VCM6</accession>
<protein>
    <recommendedName>
        <fullName>Histone-lysine N-methyltransferase ASHR1</fullName>
        <ecNumber>2.1.1.-</ecNumber>
    </recommendedName>
    <alternativeName>
        <fullName>ASH1-related protein 1</fullName>
    </alternativeName>
    <alternativeName>
        <fullName>Protein SET DOMAIN GROUP 37</fullName>
    </alternativeName>
</protein>
<keyword id="KW-0156">Chromatin regulator</keyword>
<keyword id="KW-0158">Chromosome</keyword>
<keyword id="KW-0479">Metal-binding</keyword>
<keyword id="KW-0489">Methyltransferase</keyword>
<keyword id="KW-0539">Nucleus</keyword>
<keyword id="KW-1185">Reference proteome</keyword>
<keyword id="KW-0949">S-adenosyl-L-methionine</keyword>
<keyword id="KW-0808">Transferase</keyword>
<keyword id="KW-0862">Zinc</keyword>
<keyword id="KW-0863">Zinc-finger</keyword>
<proteinExistence type="evidence at protein level"/>